<keyword id="KW-0050">Antiport</keyword>
<keyword id="KW-0406">Ion transport</keyword>
<keyword id="KW-0472">Membrane</keyword>
<keyword id="KW-0630">Potassium</keyword>
<keyword id="KW-0633">Potassium transport</keyword>
<keyword id="KW-1185">Reference proteome</keyword>
<keyword id="KW-0812">Transmembrane</keyword>
<keyword id="KW-1133">Transmembrane helix</keyword>
<keyword id="KW-0813">Transport</keyword>
<reference key="1">
    <citation type="journal article" date="2004" name="Plant Physiol.">
        <title>Expression patterns of a novel AtCHX gene family highlight potential roles in osmotic adjustment and K+ homeostasis in pollen development.</title>
        <authorList>
            <person name="Sze H."/>
            <person name="Padmanaban S."/>
            <person name="Cellier F."/>
            <person name="Honys D."/>
            <person name="Cheng N.-H."/>
            <person name="Bock K.W."/>
            <person name="Conejero G."/>
            <person name="Li X."/>
            <person name="Twell D."/>
            <person name="Ward J.M."/>
            <person name="Hirschi K.D."/>
        </authorList>
    </citation>
    <scope>NUCLEOTIDE SEQUENCE [MRNA]</scope>
    <scope>TISSUE SPECIFICITY</scope>
    <scope>GENE FAMILY</scope>
    <scope>NOMENCLATURE</scope>
    <source>
        <tissue>Pollen</tissue>
    </source>
</reference>
<reference key="2">
    <citation type="journal article" date="1999" name="Nature">
        <title>Sequence and analysis of chromosome 2 of the plant Arabidopsis thaliana.</title>
        <authorList>
            <person name="Lin X."/>
            <person name="Kaul S."/>
            <person name="Rounsley S.D."/>
            <person name="Shea T.P."/>
            <person name="Benito M.-I."/>
            <person name="Town C.D."/>
            <person name="Fujii C.Y."/>
            <person name="Mason T.M."/>
            <person name="Bowman C.L."/>
            <person name="Barnstead M.E."/>
            <person name="Feldblyum T.V."/>
            <person name="Buell C.R."/>
            <person name="Ketchum K.A."/>
            <person name="Lee J.J."/>
            <person name="Ronning C.M."/>
            <person name="Koo H.L."/>
            <person name="Moffat K.S."/>
            <person name="Cronin L.A."/>
            <person name="Shen M."/>
            <person name="Pai G."/>
            <person name="Van Aken S."/>
            <person name="Umayam L."/>
            <person name="Tallon L.J."/>
            <person name="Gill J.E."/>
            <person name="Adams M.D."/>
            <person name="Carrera A.J."/>
            <person name="Creasy T.H."/>
            <person name="Goodman H.M."/>
            <person name="Somerville C.R."/>
            <person name="Copenhaver G.P."/>
            <person name="Preuss D."/>
            <person name="Nierman W.C."/>
            <person name="White O."/>
            <person name="Eisen J.A."/>
            <person name="Salzberg S.L."/>
            <person name="Fraser C.M."/>
            <person name="Venter J.C."/>
        </authorList>
    </citation>
    <scope>NUCLEOTIDE SEQUENCE [LARGE SCALE GENOMIC DNA]</scope>
    <source>
        <strain>cv. Columbia</strain>
    </source>
</reference>
<reference key="3">
    <citation type="journal article" date="2017" name="Plant J.">
        <title>Araport11: a complete reannotation of the Arabidopsis thaliana reference genome.</title>
        <authorList>
            <person name="Cheng C.Y."/>
            <person name="Krishnakumar V."/>
            <person name="Chan A.P."/>
            <person name="Thibaud-Nissen F."/>
            <person name="Schobel S."/>
            <person name="Town C.D."/>
        </authorList>
    </citation>
    <scope>GENOME REANNOTATION</scope>
    <source>
        <strain>cv. Columbia</strain>
    </source>
</reference>
<reference key="4">
    <citation type="journal article" date="2001" name="Plant Physiol.">
        <title>Phylogenetic relationships within cation transporter families of Arabidopsis.</title>
        <authorList>
            <person name="Maeser P."/>
            <person name="Thomine S."/>
            <person name="Schroeder J.I."/>
            <person name="Ward J.M."/>
            <person name="Hirschi K."/>
            <person name="Sze H."/>
            <person name="Talke I.N."/>
            <person name="Amtmann A."/>
            <person name="Maathuis F.J.M."/>
            <person name="Sanders D."/>
            <person name="Harper J.F."/>
            <person name="Tchieu J."/>
            <person name="Gribskov M."/>
            <person name="Persans M.W."/>
            <person name="Salt D.E."/>
            <person name="Kim S.A."/>
            <person name="Guerinot M.L."/>
        </authorList>
    </citation>
    <scope>GENE FAMILY</scope>
    <scope>NOMENCLATURE</scope>
</reference>
<feature type="chain" id="PRO_0000394985" description="Cation/H(+) antiporter 15">
    <location>
        <begin position="1"/>
        <end position="821"/>
    </location>
</feature>
<feature type="transmembrane region" description="Helical" evidence="2">
    <location>
        <begin position="37"/>
        <end position="57"/>
    </location>
</feature>
<feature type="transmembrane region" description="Helical" evidence="2">
    <location>
        <begin position="65"/>
        <end position="82"/>
    </location>
</feature>
<feature type="transmembrane region" description="Helical" evidence="2">
    <location>
        <begin position="97"/>
        <end position="117"/>
    </location>
</feature>
<feature type="transmembrane region" description="Helical" evidence="2">
    <location>
        <begin position="131"/>
        <end position="151"/>
    </location>
</feature>
<feature type="transmembrane region" description="Helical" evidence="2">
    <location>
        <begin position="166"/>
        <end position="186"/>
    </location>
</feature>
<feature type="transmembrane region" description="Helical" evidence="2">
    <location>
        <begin position="200"/>
        <end position="220"/>
    </location>
</feature>
<feature type="transmembrane region" description="Helical" evidence="2">
    <location>
        <begin position="228"/>
        <end position="248"/>
    </location>
</feature>
<feature type="transmembrane region" description="Helical" evidence="2">
    <location>
        <begin position="268"/>
        <end position="288"/>
    </location>
</feature>
<feature type="transmembrane region" description="Helical" evidence="2">
    <location>
        <begin position="292"/>
        <end position="312"/>
    </location>
</feature>
<feature type="transmembrane region" description="Helical" evidence="2">
    <location>
        <begin position="318"/>
        <end position="338"/>
    </location>
</feature>
<feature type="transmembrane region" description="Helical" evidence="2">
    <location>
        <begin position="350"/>
        <end position="370"/>
    </location>
</feature>
<feature type="transmembrane region" description="Helical" evidence="2">
    <location>
        <begin position="378"/>
        <end position="398"/>
    </location>
</feature>
<feature type="transmembrane region" description="Helical" evidence="2">
    <location>
        <begin position="410"/>
        <end position="430"/>
    </location>
</feature>
<feature type="region of interest" description="Disordered" evidence="3">
    <location>
        <begin position="800"/>
        <end position="821"/>
    </location>
</feature>
<proteinExistence type="evidence at transcript level"/>
<protein>
    <recommendedName>
        <fullName>Cation/H(+) antiporter 15</fullName>
    </recommendedName>
    <alternativeName>
        <fullName>Protein CATION/H+ EXCHANGER 15</fullName>
        <shortName>AtCHX15</shortName>
    </alternativeName>
</protein>
<dbReference type="EMBL" id="AY926472">
    <property type="protein sequence ID" value="AAX49544.1"/>
    <property type="molecule type" value="mRNA"/>
</dbReference>
<dbReference type="EMBL" id="AC007063">
    <property type="protein sequence ID" value="AAD22684.1"/>
    <property type="molecule type" value="Genomic_DNA"/>
</dbReference>
<dbReference type="EMBL" id="CP002685">
    <property type="protein sequence ID" value="AEC06246.1"/>
    <property type="molecule type" value="Genomic_DNA"/>
</dbReference>
<dbReference type="PIR" id="B84509">
    <property type="entry name" value="B84509"/>
</dbReference>
<dbReference type="RefSeq" id="NP_178985.1">
    <property type="nucleotide sequence ID" value="NM_126941.2"/>
</dbReference>
<dbReference type="SMR" id="Q9SIT5"/>
<dbReference type="FunCoup" id="Q9SIT5">
    <property type="interactions" value="161"/>
</dbReference>
<dbReference type="STRING" id="3702.Q9SIT5"/>
<dbReference type="PaxDb" id="3702-AT2G13620.1"/>
<dbReference type="ProteomicsDB" id="246840"/>
<dbReference type="EnsemblPlants" id="AT2G13620.1">
    <property type="protein sequence ID" value="AT2G13620.1"/>
    <property type="gene ID" value="AT2G13620"/>
</dbReference>
<dbReference type="GeneID" id="815847"/>
<dbReference type="Gramene" id="AT2G13620.1">
    <property type="protein sequence ID" value="AT2G13620.1"/>
    <property type="gene ID" value="AT2G13620"/>
</dbReference>
<dbReference type="KEGG" id="ath:AT2G13620"/>
<dbReference type="Araport" id="AT2G13620"/>
<dbReference type="TAIR" id="AT2G13620">
    <property type="gene designation" value="CHX15"/>
</dbReference>
<dbReference type="eggNOG" id="KOG1650">
    <property type="taxonomic scope" value="Eukaryota"/>
</dbReference>
<dbReference type="HOGENOM" id="CLU_005126_6_2_1"/>
<dbReference type="InParanoid" id="Q9SIT5"/>
<dbReference type="OMA" id="TWRESIT"/>
<dbReference type="PhylomeDB" id="Q9SIT5"/>
<dbReference type="PRO" id="PR:Q9SIT5"/>
<dbReference type="Proteomes" id="UP000006548">
    <property type="component" value="Chromosome 2"/>
</dbReference>
<dbReference type="ExpressionAtlas" id="Q9SIT5">
    <property type="expression patterns" value="baseline and differential"/>
</dbReference>
<dbReference type="GO" id="GO:0016020">
    <property type="term" value="C:membrane"/>
    <property type="evidence" value="ECO:0007669"/>
    <property type="project" value="UniProtKB-SubCell"/>
</dbReference>
<dbReference type="GO" id="GO:0015297">
    <property type="term" value="F:antiporter activity"/>
    <property type="evidence" value="ECO:0007669"/>
    <property type="project" value="UniProtKB-KW"/>
</dbReference>
<dbReference type="GO" id="GO:0006813">
    <property type="term" value="P:potassium ion transport"/>
    <property type="evidence" value="ECO:0007669"/>
    <property type="project" value="UniProtKB-KW"/>
</dbReference>
<dbReference type="GO" id="GO:1902600">
    <property type="term" value="P:proton transmembrane transport"/>
    <property type="evidence" value="ECO:0007669"/>
    <property type="project" value="InterPro"/>
</dbReference>
<dbReference type="GO" id="GO:0006885">
    <property type="term" value="P:regulation of pH"/>
    <property type="evidence" value="ECO:0000315"/>
    <property type="project" value="TAIR"/>
</dbReference>
<dbReference type="FunFam" id="1.20.1530.20:FF:000003">
    <property type="entry name" value="Cation/H(+) antiporter 15"/>
    <property type="match status" value="1"/>
</dbReference>
<dbReference type="Gene3D" id="1.20.1530.20">
    <property type="match status" value="1"/>
</dbReference>
<dbReference type="Gene3D" id="3.40.50.12370">
    <property type="match status" value="1"/>
</dbReference>
<dbReference type="InterPro" id="IPR006153">
    <property type="entry name" value="Cation/H_exchanger_TM"/>
</dbReference>
<dbReference type="InterPro" id="IPR050794">
    <property type="entry name" value="CPA2_transporter"/>
</dbReference>
<dbReference type="InterPro" id="IPR038770">
    <property type="entry name" value="Na+/solute_symporter_sf"/>
</dbReference>
<dbReference type="PANTHER" id="PTHR32468">
    <property type="entry name" value="CATION/H + ANTIPORTER"/>
    <property type="match status" value="1"/>
</dbReference>
<dbReference type="PANTHER" id="PTHR32468:SF26">
    <property type="entry name" value="CATION_H(+) ANTIPORTER 15"/>
    <property type="match status" value="1"/>
</dbReference>
<dbReference type="Pfam" id="PF23256">
    <property type="entry name" value="CHX17_2nd"/>
    <property type="match status" value="1"/>
</dbReference>
<dbReference type="Pfam" id="PF23259">
    <property type="entry name" value="CHX17_C"/>
    <property type="match status" value="1"/>
</dbReference>
<dbReference type="Pfam" id="PF00999">
    <property type="entry name" value="Na_H_Exchanger"/>
    <property type="match status" value="1"/>
</dbReference>
<sequence length="821" mass="89860">MATSEEPSTDASIICYAPSMITTNGVWQGDNPLDFSLPLFVLQLTLVVVVTRFFVFILKPFRQPRVISEILGGIVLGPSVLGRSTKFAHTIFPQRSVMVLETMANVGLLYFLFLVGVEMDIMVVRKTGKRALTIAIGGMVLPFLIGAAFSFSMHRSEDHLGQGTYILFLGVALSVTAFPVLARILAELKLINTEIGRISMSAALVNDMFAWILLALAIALAESDKTSFASLWVMISSAVFIAVCVFVVRPGIAWIIRKTPEGENFSEFHICLILTGVMISGFITDAIGTHSVFGAFVFGLVIPNGPLGLTLIEKLEDFVSGLLLPLFFAISGLKTNIAAIQGPATWLTLFLVIFLACAGKVIGTVIVAFFHGMPVREGITLGLLLNTKGLVEMIVLNVGKDQKVLDDETFATMVLVALVMTGVITPIVTILYKPVKKSVSYKRRTIQQTKPDSELRVLVCVHTPRNVPTIINLLEASHPTKRSPICIYVLHLVELTGRASAMLIVHNTRKSGRPALNRTQAQSDHIINAFENYEQHAAFVAVQPLTAISPYSTMHEDVCSLAEDKRVSFIIIPFHKQQTVDGGMESTNPAYRLVNQNLLENSPCSVGILVDRGLNGATRLNSNTVSLQVAVLFFGGPDDREALAYAWRMAQHPGITLTVLRFIHDEDEADTASTRATNDSDLKIPKMDHRKQRQLDDDYINLFRAENAEYESIVYIEKLVSNGEETVAAVRSMDSSHDLFIVGRGEGMSSPLTAGLTDWSECPELGAIGDLLASSDFAATVSVLVVQQYVGSWAQEDDMDFPESPVHSHETKVTYGLENPR</sequence>
<gene>
    <name type="primary">CHX15</name>
    <name type="ordered locus">At2g13620</name>
    <name type="ORF">T10F5.16</name>
</gene>
<name>CHX15_ARATH</name>
<organism>
    <name type="scientific">Arabidopsis thaliana</name>
    <name type="common">Mouse-ear cress</name>
    <dbReference type="NCBI Taxonomy" id="3702"/>
    <lineage>
        <taxon>Eukaryota</taxon>
        <taxon>Viridiplantae</taxon>
        <taxon>Streptophyta</taxon>
        <taxon>Embryophyta</taxon>
        <taxon>Tracheophyta</taxon>
        <taxon>Spermatophyta</taxon>
        <taxon>Magnoliopsida</taxon>
        <taxon>eudicotyledons</taxon>
        <taxon>Gunneridae</taxon>
        <taxon>Pentapetalae</taxon>
        <taxon>rosids</taxon>
        <taxon>malvids</taxon>
        <taxon>Brassicales</taxon>
        <taxon>Brassicaceae</taxon>
        <taxon>Camelineae</taxon>
        <taxon>Arabidopsis</taxon>
    </lineage>
</organism>
<accession>Q9SIT5</accession>
<evidence type="ECO:0000250" key="1"/>
<evidence type="ECO:0000255" key="2"/>
<evidence type="ECO:0000256" key="3">
    <source>
        <dbReference type="SAM" id="MobiDB-lite"/>
    </source>
</evidence>
<evidence type="ECO:0000269" key="4">
    <source>
    </source>
</evidence>
<evidence type="ECO:0000305" key="5"/>
<comment type="function">
    <text evidence="1">May operate as a cation/H(+) antiporter.</text>
</comment>
<comment type="subcellular location">
    <subcellularLocation>
        <location evidence="1">Membrane</location>
        <topology evidence="1">Multi-pass membrane protein</topology>
    </subcellularLocation>
</comment>
<comment type="tissue specificity">
    <text evidence="4">Specifically expressed in pollen.</text>
</comment>
<comment type="similarity">
    <text evidence="5">Belongs to the monovalent cation:proton antiporter 2 (CPA2) transporter (TC 2.A.37) family. CHX (TC 2.A.37.4) subfamily.</text>
</comment>